<proteinExistence type="inferred from homology"/>
<organism>
    <name type="scientific">Bacillus thuringiensis (strain Al Hakam)</name>
    <dbReference type="NCBI Taxonomy" id="412694"/>
    <lineage>
        <taxon>Bacteria</taxon>
        <taxon>Bacillati</taxon>
        <taxon>Bacillota</taxon>
        <taxon>Bacilli</taxon>
        <taxon>Bacillales</taxon>
        <taxon>Bacillaceae</taxon>
        <taxon>Bacillus</taxon>
        <taxon>Bacillus cereus group</taxon>
    </lineage>
</organism>
<name>HUTI_BACAH</name>
<reference key="1">
    <citation type="journal article" date="2007" name="J. Bacteriol.">
        <title>The complete genome sequence of Bacillus thuringiensis Al Hakam.</title>
        <authorList>
            <person name="Challacombe J.F."/>
            <person name="Altherr M.R."/>
            <person name="Xie G."/>
            <person name="Bhotika S.S."/>
            <person name="Brown N."/>
            <person name="Bruce D."/>
            <person name="Campbell C.S."/>
            <person name="Campbell M.L."/>
            <person name="Chen J."/>
            <person name="Chertkov O."/>
            <person name="Cleland C."/>
            <person name="Dimitrijevic M."/>
            <person name="Doggett N.A."/>
            <person name="Fawcett J.J."/>
            <person name="Glavina T."/>
            <person name="Goodwin L.A."/>
            <person name="Green L.D."/>
            <person name="Han C.S."/>
            <person name="Hill K.K."/>
            <person name="Hitchcock P."/>
            <person name="Jackson P.J."/>
            <person name="Keim P."/>
            <person name="Kewalramani A.R."/>
            <person name="Longmire J."/>
            <person name="Lucas S."/>
            <person name="Malfatti S."/>
            <person name="Martinez D."/>
            <person name="McMurry K."/>
            <person name="Meincke L.J."/>
            <person name="Misra M."/>
            <person name="Moseman B.L."/>
            <person name="Mundt M."/>
            <person name="Munk A.C."/>
            <person name="Okinaka R.T."/>
            <person name="Parson-Quintana B."/>
            <person name="Reilly L.P."/>
            <person name="Richardson P."/>
            <person name="Robinson D.L."/>
            <person name="Saunders E."/>
            <person name="Tapia R."/>
            <person name="Tesmer J.G."/>
            <person name="Thayer N."/>
            <person name="Thompson L.S."/>
            <person name="Tice H."/>
            <person name="Ticknor L.O."/>
            <person name="Wills P.L."/>
            <person name="Gilna P."/>
            <person name="Brettin T.S."/>
        </authorList>
    </citation>
    <scope>NUCLEOTIDE SEQUENCE [LARGE SCALE GENOMIC DNA]</scope>
    <source>
        <strain>Al Hakam</strain>
    </source>
</reference>
<gene>
    <name evidence="1" type="primary">hutI</name>
    <name type="ordered locus">BALH_3285</name>
</gene>
<comment type="function">
    <text evidence="1">Catalyzes the hydrolytic cleavage of the carbon-nitrogen bond in imidazolone-5-propanoate to yield N-formimidoyl-L-glutamate. It is the third step in the universal histidine degradation pathway.</text>
</comment>
<comment type="catalytic activity">
    <reaction evidence="1">
        <text>4-imidazolone-5-propanoate + H2O = N-formimidoyl-L-glutamate</text>
        <dbReference type="Rhea" id="RHEA:23660"/>
        <dbReference type="ChEBI" id="CHEBI:15377"/>
        <dbReference type="ChEBI" id="CHEBI:58928"/>
        <dbReference type="ChEBI" id="CHEBI:77893"/>
        <dbReference type="EC" id="3.5.2.7"/>
    </reaction>
</comment>
<comment type="cofactor">
    <cofactor evidence="1">
        <name>Zn(2+)</name>
        <dbReference type="ChEBI" id="CHEBI:29105"/>
    </cofactor>
    <cofactor evidence="1">
        <name>Fe(3+)</name>
        <dbReference type="ChEBI" id="CHEBI:29034"/>
    </cofactor>
    <text evidence="1">Binds 1 zinc or iron ion per subunit.</text>
</comment>
<comment type="pathway">
    <text evidence="1">Amino-acid degradation; L-histidine degradation into L-glutamate; N-formimidoyl-L-glutamate from L-histidine: step 3/3.</text>
</comment>
<comment type="subcellular location">
    <subcellularLocation>
        <location evidence="1">Cytoplasm</location>
    </subcellularLocation>
</comment>
<comment type="similarity">
    <text evidence="1">Belongs to the metallo-dependent hydrolases superfamily. HutI family.</text>
</comment>
<evidence type="ECO:0000255" key="1">
    <source>
        <dbReference type="HAMAP-Rule" id="MF_00372"/>
    </source>
</evidence>
<protein>
    <recommendedName>
        <fullName evidence="1">Imidazolonepropionase</fullName>
        <ecNumber evidence="1">3.5.2.7</ecNumber>
    </recommendedName>
    <alternativeName>
        <fullName evidence="1">Imidazolone-5-propionate hydrolase</fullName>
    </alternativeName>
</protein>
<keyword id="KW-0963">Cytoplasm</keyword>
<keyword id="KW-0369">Histidine metabolism</keyword>
<keyword id="KW-0378">Hydrolase</keyword>
<keyword id="KW-0408">Iron</keyword>
<keyword id="KW-0479">Metal-binding</keyword>
<keyword id="KW-0862">Zinc</keyword>
<dbReference type="EC" id="3.5.2.7" evidence="1"/>
<dbReference type="EMBL" id="CP000485">
    <property type="protein sequence ID" value="ABK86530.1"/>
    <property type="molecule type" value="Genomic_DNA"/>
</dbReference>
<dbReference type="RefSeq" id="WP_000887530.1">
    <property type="nucleotide sequence ID" value="NC_008600.1"/>
</dbReference>
<dbReference type="SMR" id="A0RH37"/>
<dbReference type="KEGG" id="btl:BALH_3285"/>
<dbReference type="HOGENOM" id="CLU_041647_0_1_9"/>
<dbReference type="UniPathway" id="UPA00379">
    <property type="reaction ID" value="UER00551"/>
</dbReference>
<dbReference type="GO" id="GO:0005737">
    <property type="term" value="C:cytoplasm"/>
    <property type="evidence" value="ECO:0007669"/>
    <property type="project" value="UniProtKB-SubCell"/>
</dbReference>
<dbReference type="GO" id="GO:0050480">
    <property type="term" value="F:imidazolonepropionase activity"/>
    <property type="evidence" value="ECO:0007669"/>
    <property type="project" value="UniProtKB-UniRule"/>
</dbReference>
<dbReference type="GO" id="GO:0005506">
    <property type="term" value="F:iron ion binding"/>
    <property type="evidence" value="ECO:0007669"/>
    <property type="project" value="UniProtKB-UniRule"/>
</dbReference>
<dbReference type="GO" id="GO:0008270">
    <property type="term" value="F:zinc ion binding"/>
    <property type="evidence" value="ECO:0007669"/>
    <property type="project" value="UniProtKB-UniRule"/>
</dbReference>
<dbReference type="GO" id="GO:0019556">
    <property type="term" value="P:L-histidine catabolic process to glutamate and formamide"/>
    <property type="evidence" value="ECO:0007669"/>
    <property type="project" value="UniProtKB-UniPathway"/>
</dbReference>
<dbReference type="GO" id="GO:0019557">
    <property type="term" value="P:L-histidine catabolic process to glutamate and formate"/>
    <property type="evidence" value="ECO:0007669"/>
    <property type="project" value="UniProtKB-UniPathway"/>
</dbReference>
<dbReference type="CDD" id="cd01296">
    <property type="entry name" value="Imidazolone-5PH"/>
    <property type="match status" value="1"/>
</dbReference>
<dbReference type="FunFam" id="3.20.20.140:FF:000007">
    <property type="entry name" value="Imidazolonepropionase"/>
    <property type="match status" value="1"/>
</dbReference>
<dbReference type="Gene3D" id="3.20.20.140">
    <property type="entry name" value="Metal-dependent hydrolases"/>
    <property type="match status" value="1"/>
</dbReference>
<dbReference type="Gene3D" id="2.30.40.10">
    <property type="entry name" value="Urease, subunit C, domain 1"/>
    <property type="match status" value="1"/>
</dbReference>
<dbReference type="HAMAP" id="MF_00372">
    <property type="entry name" value="HutI"/>
    <property type="match status" value="1"/>
</dbReference>
<dbReference type="InterPro" id="IPR006680">
    <property type="entry name" value="Amidohydro-rel"/>
</dbReference>
<dbReference type="InterPro" id="IPR005920">
    <property type="entry name" value="HutI"/>
</dbReference>
<dbReference type="InterPro" id="IPR011059">
    <property type="entry name" value="Metal-dep_hydrolase_composite"/>
</dbReference>
<dbReference type="InterPro" id="IPR032466">
    <property type="entry name" value="Metal_Hydrolase"/>
</dbReference>
<dbReference type="NCBIfam" id="TIGR01224">
    <property type="entry name" value="hutI"/>
    <property type="match status" value="1"/>
</dbReference>
<dbReference type="PANTHER" id="PTHR42752">
    <property type="entry name" value="IMIDAZOLONEPROPIONASE"/>
    <property type="match status" value="1"/>
</dbReference>
<dbReference type="PANTHER" id="PTHR42752:SF1">
    <property type="entry name" value="IMIDAZOLONEPROPIONASE-RELATED"/>
    <property type="match status" value="1"/>
</dbReference>
<dbReference type="Pfam" id="PF01979">
    <property type="entry name" value="Amidohydro_1"/>
    <property type="match status" value="1"/>
</dbReference>
<dbReference type="SUPFAM" id="SSF51338">
    <property type="entry name" value="Composite domain of metallo-dependent hydrolases"/>
    <property type="match status" value="1"/>
</dbReference>
<dbReference type="SUPFAM" id="SSF51556">
    <property type="entry name" value="Metallo-dependent hydrolases"/>
    <property type="match status" value="1"/>
</dbReference>
<feature type="chain" id="PRO_0000306433" description="Imidazolonepropionase">
    <location>
        <begin position="1"/>
        <end position="423"/>
    </location>
</feature>
<feature type="binding site" evidence="1">
    <location>
        <position position="78"/>
    </location>
    <ligand>
        <name>Fe(3+)</name>
        <dbReference type="ChEBI" id="CHEBI:29034"/>
    </ligand>
</feature>
<feature type="binding site" evidence="1">
    <location>
        <position position="78"/>
    </location>
    <ligand>
        <name>Zn(2+)</name>
        <dbReference type="ChEBI" id="CHEBI:29105"/>
    </ligand>
</feature>
<feature type="binding site" evidence="1">
    <location>
        <position position="80"/>
    </location>
    <ligand>
        <name>Fe(3+)</name>
        <dbReference type="ChEBI" id="CHEBI:29034"/>
    </ligand>
</feature>
<feature type="binding site" evidence="1">
    <location>
        <position position="80"/>
    </location>
    <ligand>
        <name>Zn(2+)</name>
        <dbReference type="ChEBI" id="CHEBI:29105"/>
    </ligand>
</feature>
<feature type="binding site" evidence="1">
    <location>
        <position position="87"/>
    </location>
    <ligand>
        <name>4-imidazolone-5-propanoate</name>
        <dbReference type="ChEBI" id="CHEBI:77893"/>
    </ligand>
</feature>
<feature type="binding site" evidence="1">
    <location>
        <position position="150"/>
    </location>
    <ligand>
        <name>4-imidazolone-5-propanoate</name>
        <dbReference type="ChEBI" id="CHEBI:77893"/>
    </ligand>
</feature>
<feature type="binding site" evidence="1">
    <location>
        <position position="150"/>
    </location>
    <ligand>
        <name>N-formimidoyl-L-glutamate</name>
        <dbReference type="ChEBI" id="CHEBI:58928"/>
    </ligand>
</feature>
<feature type="binding site" evidence="1">
    <location>
        <position position="183"/>
    </location>
    <ligand>
        <name>4-imidazolone-5-propanoate</name>
        <dbReference type="ChEBI" id="CHEBI:77893"/>
    </ligand>
</feature>
<feature type="binding site" evidence="1">
    <location>
        <position position="247"/>
    </location>
    <ligand>
        <name>Fe(3+)</name>
        <dbReference type="ChEBI" id="CHEBI:29034"/>
    </ligand>
</feature>
<feature type="binding site" evidence="1">
    <location>
        <position position="247"/>
    </location>
    <ligand>
        <name>Zn(2+)</name>
        <dbReference type="ChEBI" id="CHEBI:29105"/>
    </ligand>
</feature>
<feature type="binding site" evidence="1">
    <location>
        <position position="250"/>
    </location>
    <ligand>
        <name>4-imidazolone-5-propanoate</name>
        <dbReference type="ChEBI" id="CHEBI:77893"/>
    </ligand>
</feature>
<feature type="binding site" evidence="1">
    <location>
        <position position="322"/>
    </location>
    <ligand>
        <name>Fe(3+)</name>
        <dbReference type="ChEBI" id="CHEBI:29034"/>
    </ligand>
</feature>
<feature type="binding site" evidence="1">
    <location>
        <position position="322"/>
    </location>
    <ligand>
        <name>Zn(2+)</name>
        <dbReference type="ChEBI" id="CHEBI:29105"/>
    </ligand>
</feature>
<feature type="binding site" evidence="1">
    <location>
        <position position="324"/>
    </location>
    <ligand>
        <name>N-formimidoyl-L-glutamate</name>
        <dbReference type="ChEBI" id="CHEBI:58928"/>
    </ligand>
</feature>
<feature type="binding site" evidence="1">
    <location>
        <position position="326"/>
    </location>
    <ligand>
        <name>N-formimidoyl-L-glutamate</name>
        <dbReference type="ChEBI" id="CHEBI:58928"/>
    </ligand>
</feature>
<feature type="binding site" evidence="1">
    <location>
        <position position="327"/>
    </location>
    <ligand>
        <name>4-imidazolone-5-propanoate</name>
        <dbReference type="ChEBI" id="CHEBI:77893"/>
    </ligand>
</feature>
<accession>A0RH37</accession>
<sequence>MLDTLLINIGQLLTMDQEDGLLRREAMNTLPVIENGAVGIENGVITFVGTAEEAKGLQAKEVIDCGGKMVSPGLVDPHTHLVFGGSRENEIALKLQGVPYLEILEQGGGILSTVNATKQASKEELVQKAKFHLDRMLSFGVTTVEAKSGYGLDDETEWKQLEATAQLQKEHPIDLVSTFLGAHAVPKEYKGRSKEFLQWMLDLLPEMKEKQLAEFVDIFCETGVFSVEESKEFLLKAKELGFDVKIHADEIDPLGGAEAAAEIGAASADHLVGASDKGIEMLANSNTVATLLPGTTFYLNKESFARGRKMIDEGVAVALATDFNPGSCPTENIQLIMSIAMLKLKMTPEEVWNAVTVNSSYAINRGEVAGKIRVGRKADLVLWDAYNYAYVPYHYGVSHVNTVWKNGNIAYTRGEQSWSTATI</sequence>